<dbReference type="EC" id="2.7.7.6" evidence="1"/>
<dbReference type="EMBL" id="BA000030">
    <property type="protein sequence ID" value="BAC68150.1"/>
    <property type="molecule type" value="Genomic_DNA"/>
</dbReference>
<dbReference type="RefSeq" id="WP_010981878.1">
    <property type="nucleotide sequence ID" value="NZ_BAVY01000048.1"/>
</dbReference>
<dbReference type="SMR" id="Q82QR5"/>
<dbReference type="GeneID" id="41537609"/>
<dbReference type="KEGG" id="sma:SAVERM_440"/>
<dbReference type="eggNOG" id="COG0202">
    <property type="taxonomic scope" value="Bacteria"/>
</dbReference>
<dbReference type="HOGENOM" id="CLU_053084_0_1_11"/>
<dbReference type="OrthoDB" id="9805706at2"/>
<dbReference type="Proteomes" id="UP000000428">
    <property type="component" value="Chromosome"/>
</dbReference>
<dbReference type="GO" id="GO:0005737">
    <property type="term" value="C:cytoplasm"/>
    <property type="evidence" value="ECO:0007669"/>
    <property type="project" value="UniProtKB-ARBA"/>
</dbReference>
<dbReference type="GO" id="GO:0000428">
    <property type="term" value="C:DNA-directed RNA polymerase complex"/>
    <property type="evidence" value="ECO:0007669"/>
    <property type="project" value="UniProtKB-KW"/>
</dbReference>
<dbReference type="GO" id="GO:0003677">
    <property type="term" value="F:DNA binding"/>
    <property type="evidence" value="ECO:0007669"/>
    <property type="project" value="UniProtKB-UniRule"/>
</dbReference>
<dbReference type="GO" id="GO:0003899">
    <property type="term" value="F:DNA-directed RNA polymerase activity"/>
    <property type="evidence" value="ECO:0007669"/>
    <property type="project" value="UniProtKB-UniRule"/>
</dbReference>
<dbReference type="GO" id="GO:0046983">
    <property type="term" value="F:protein dimerization activity"/>
    <property type="evidence" value="ECO:0007669"/>
    <property type="project" value="InterPro"/>
</dbReference>
<dbReference type="GO" id="GO:0006351">
    <property type="term" value="P:DNA-templated transcription"/>
    <property type="evidence" value="ECO:0007669"/>
    <property type="project" value="UniProtKB-UniRule"/>
</dbReference>
<dbReference type="CDD" id="cd06928">
    <property type="entry name" value="RNAP_alpha_NTD"/>
    <property type="match status" value="1"/>
</dbReference>
<dbReference type="FunFam" id="1.10.150.20:FF:000001">
    <property type="entry name" value="DNA-directed RNA polymerase subunit alpha"/>
    <property type="match status" value="1"/>
</dbReference>
<dbReference type="FunFam" id="2.170.120.12:FF:000001">
    <property type="entry name" value="DNA-directed RNA polymerase subunit alpha"/>
    <property type="match status" value="1"/>
</dbReference>
<dbReference type="Gene3D" id="1.10.150.20">
    <property type="entry name" value="5' to 3' exonuclease, C-terminal subdomain"/>
    <property type="match status" value="1"/>
</dbReference>
<dbReference type="Gene3D" id="2.170.120.12">
    <property type="entry name" value="DNA-directed RNA polymerase, insert domain"/>
    <property type="match status" value="1"/>
</dbReference>
<dbReference type="Gene3D" id="3.30.1360.10">
    <property type="entry name" value="RNA polymerase, RBP11-like subunit"/>
    <property type="match status" value="1"/>
</dbReference>
<dbReference type="HAMAP" id="MF_00059">
    <property type="entry name" value="RNApol_bact_RpoA"/>
    <property type="match status" value="1"/>
</dbReference>
<dbReference type="InterPro" id="IPR011262">
    <property type="entry name" value="DNA-dir_RNA_pol_insert"/>
</dbReference>
<dbReference type="InterPro" id="IPR011263">
    <property type="entry name" value="DNA-dir_RNA_pol_RpoA/D/Rpb3"/>
</dbReference>
<dbReference type="InterPro" id="IPR011773">
    <property type="entry name" value="DNA-dir_RpoA"/>
</dbReference>
<dbReference type="InterPro" id="IPR036603">
    <property type="entry name" value="RBP11-like"/>
</dbReference>
<dbReference type="InterPro" id="IPR011260">
    <property type="entry name" value="RNAP_asu_C"/>
</dbReference>
<dbReference type="InterPro" id="IPR036643">
    <property type="entry name" value="RNApol_insert_sf"/>
</dbReference>
<dbReference type="NCBIfam" id="NF003513">
    <property type="entry name" value="PRK05182.1-2"/>
    <property type="match status" value="1"/>
</dbReference>
<dbReference type="NCBIfam" id="NF003514">
    <property type="entry name" value="PRK05182.1-4"/>
    <property type="match status" value="1"/>
</dbReference>
<dbReference type="NCBIfam" id="NF003519">
    <property type="entry name" value="PRK05182.2-5"/>
    <property type="match status" value="1"/>
</dbReference>
<dbReference type="NCBIfam" id="TIGR02027">
    <property type="entry name" value="rpoA"/>
    <property type="match status" value="1"/>
</dbReference>
<dbReference type="Pfam" id="PF01000">
    <property type="entry name" value="RNA_pol_A_bac"/>
    <property type="match status" value="1"/>
</dbReference>
<dbReference type="Pfam" id="PF03118">
    <property type="entry name" value="RNA_pol_A_CTD"/>
    <property type="match status" value="1"/>
</dbReference>
<dbReference type="Pfam" id="PF01193">
    <property type="entry name" value="RNA_pol_L"/>
    <property type="match status" value="1"/>
</dbReference>
<dbReference type="SMART" id="SM00662">
    <property type="entry name" value="RPOLD"/>
    <property type="match status" value="1"/>
</dbReference>
<dbReference type="SUPFAM" id="SSF47789">
    <property type="entry name" value="C-terminal domain of RNA polymerase alpha subunit"/>
    <property type="match status" value="1"/>
</dbReference>
<dbReference type="SUPFAM" id="SSF56553">
    <property type="entry name" value="Insert subdomain of RNA polymerase alpha subunit"/>
    <property type="match status" value="1"/>
</dbReference>
<dbReference type="SUPFAM" id="SSF55257">
    <property type="entry name" value="RBP11-like subunits of RNA polymerase"/>
    <property type="match status" value="1"/>
</dbReference>
<keyword id="KW-0240">DNA-directed RNA polymerase</keyword>
<keyword id="KW-0548">Nucleotidyltransferase</keyword>
<keyword id="KW-1185">Reference proteome</keyword>
<keyword id="KW-0804">Transcription</keyword>
<keyword id="KW-0808">Transferase</keyword>
<gene>
    <name evidence="1" type="primary">rpoA2</name>
    <name type="ordered locus">SAV_440</name>
</gene>
<comment type="function">
    <text evidence="1">DNA-dependent RNA polymerase catalyzes the transcription of DNA into RNA using the four ribonucleoside triphosphates as substrates.</text>
</comment>
<comment type="catalytic activity">
    <reaction evidence="1">
        <text>RNA(n) + a ribonucleoside 5'-triphosphate = RNA(n+1) + diphosphate</text>
        <dbReference type="Rhea" id="RHEA:21248"/>
        <dbReference type="Rhea" id="RHEA-COMP:14527"/>
        <dbReference type="Rhea" id="RHEA-COMP:17342"/>
        <dbReference type="ChEBI" id="CHEBI:33019"/>
        <dbReference type="ChEBI" id="CHEBI:61557"/>
        <dbReference type="ChEBI" id="CHEBI:140395"/>
        <dbReference type="EC" id="2.7.7.6"/>
    </reaction>
</comment>
<comment type="subunit">
    <text evidence="1">Homodimer. The RNAP catalytic core consists of 2 alpha, 1 beta, 1 beta' and 1 omega subunit. When a sigma factor is associated with the core the holoenzyme is formed, which can initiate transcription.</text>
</comment>
<comment type="domain">
    <text evidence="1">The N-terminal domain is essential for RNAP assembly and basal transcription, whereas the C-terminal domain is involved in interaction with transcriptional regulators and with upstream promoter elements.</text>
</comment>
<comment type="similarity">
    <text evidence="1">Belongs to the RNA polymerase alpha chain family.</text>
</comment>
<organism>
    <name type="scientific">Streptomyces avermitilis (strain ATCC 31267 / DSM 46492 / JCM 5070 / NBRC 14893 / NCIMB 12804 / NRRL 8165 / MA-4680)</name>
    <dbReference type="NCBI Taxonomy" id="227882"/>
    <lineage>
        <taxon>Bacteria</taxon>
        <taxon>Bacillati</taxon>
        <taxon>Actinomycetota</taxon>
        <taxon>Actinomycetes</taxon>
        <taxon>Kitasatosporales</taxon>
        <taxon>Streptomycetaceae</taxon>
        <taxon>Streptomyces</taxon>
    </lineage>
</organism>
<sequence>MLIAQRPSLTEEVVDEFRSRFVIEPLEPGFGYTLGNSLRRTLLSSIPGAAVTSIRVDGVLHEFTTVPGVKEDVTDLILNIKQLVVSSEHDEPVVMYLRKQGPGLVTAADIAPPAGVEVHNPDLVLATLNGKGKLEMELTVERGRGYVSAVQNKQVGQEIGRIPVDSIYSPVLKVTYKVEATRVEQRTDFDKLIVDVETKQAMRPRDAMASAGKTLVELFGLARELNIDAEGIDMGPSPVDAALAADLVMPIEELELTVRSYNCLKREGVHSVGELVARSEADLLDIRNFGAKSIDEVKAKLAGMGLGLKDSPPGFDPTAAALGADDDADAGFLETEHY</sequence>
<proteinExistence type="inferred from homology"/>
<reference key="1">
    <citation type="journal article" date="2001" name="Proc. Natl. Acad. Sci. U.S.A.">
        <title>Genome sequence of an industrial microorganism Streptomyces avermitilis: deducing the ability of producing secondary metabolites.</title>
        <authorList>
            <person name="Omura S."/>
            <person name="Ikeda H."/>
            <person name="Ishikawa J."/>
            <person name="Hanamoto A."/>
            <person name="Takahashi C."/>
            <person name="Shinose M."/>
            <person name="Takahashi Y."/>
            <person name="Horikawa H."/>
            <person name="Nakazawa H."/>
            <person name="Osonoe T."/>
            <person name="Kikuchi H."/>
            <person name="Shiba T."/>
            <person name="Sakaki Y."/>
            <person name="Hattori M."/>
        </authorList>
    </citation>
    <scope>NUCLEOTIDE SEQUENCE [LARGE SCALE GENOMIC DNA]</scope>
    <source>
        <strain>ATCC 31267 / DSM 46492 / JCM 5070 / NBRC 14893 / NCIMB 12804 / NRRL 8165 / MA-4680</strain>
    </source>
</reference>
<reference key="2">
    <citation type="journal article" date="2003" name="Nat. Biotechnol.">
        <title>Complete genome sequence and comparative analysis of the industrial microorganism Streptomyces avermitilis.</title>
        <authorList>
            <person name="Ikeda H."/>
            <person name="Ishikawa J."/>
            <person name="Hanamoto A."/>
            <person name="Shinose M."/>
            <person name="Kikuchi H."/>
            <person name="Shiba T."/>
            <person name="Sakaki Y."/>
            <person name="Hattori M."/>
            <person name="Omura S."/>
        </authorList>
    </citation>
    <scope>NUCLEOTIDE SEQUENCE [LARGE SCALE GENOMIC DNA]</scope>
    <source>
        <strain>ATCC 31267 / DSM 46492 / JCM 5070 / NBRC 14893 / NCIMB 12804 / NRRL 8165 / MA-4680</strain>
    </source>
</reference>
<protein>
    <recommendedName>
        <fullName evidence="1">DNA-directed RNA polymerase subunit alpha</fullName>
        <shortName evidence="1">RNAP subunit alpha</shortName>
        <ecNumber evidence="1">2.7.7.6</ecNumber>
    </recommendedName>
    <alternativeName>
        <fullName evidence="1">RNA polymerase subunit alpha</fullName>
    </alternativeName>
    <alternativeName>
        <fullName evidence="1">Transcriptase subunit alpha</fullName>
    </alternativeName>
</protein>
<name>RPOA2_STRAW</name>
<accession>Q82QR5</accession>
<evidence type="ECO:0000255" key="1">
    <source>
        <dbReference type="HAMAP-Rule" id="MF_00059"/>
    </source>
</evidence>
<feature type="chain" id="PRO_0000175391" description="DNA-directed RNA polymerase subunit alpha">
    <location>
        <begin position="1"/>
        <end position="338"/>
    </location>
</feature>
<feature type="region of interest" description="Alpha N-terminal domain (alpha-NTD)" evidence="1">
    <location>
        <begin position="1"/>
        <end position="226"/>
    </location>
</feature>
<feature type="region of interest" description="Alpha C-terminal domain (alpha-CTD)" evidence="1">
    <location>
        <begin position="243"/>
        <end position="338"/>
    </location>
</feature>